<comment type="function">
    <text evidence="1 6 7 8">Non-essential E3 ubiquitin-protein ligase that specifically catalyzes 'Lys-29'- and 'Lys-48'-linked polyubiquitin chains (By similarity). Accepts ubiquitin from an E2 ubiquitin-conjugating enzyme in the form of a thioester and then directly transfers the ubiquitin to targeted substrates (By similarity). Associates with the proteasome and promotes elongation of ubiquitin chains on substrates bound to the proteasome (PubMed:17190603). Elongation of ubiquitin chains on substrates bound to the proteasome promotes proteasomal processivity (PubMed:20008553). Also promotes ubiquitin elongation of 26S proteasome subunit RPN10 (PubMed:17190603). Involved in the stress response required to maintain cell fitness following heat-shock: acts by mediating ubiquitination of cytosolic misfolded proteins, leading to their subsequent degradation (PubMed:21983566).</text>
</comment>
<comment type="catalytic activity">
    <reaction evidence="6 8">
        <text>S-ubiquitinyl-[E2 ubiquitin-conjugating enzyme]-L-cysteine + [acceptor protein]-L-lysine = [E2 ubiquitin-conjugating enzyme]-L-cysteine + N(6)-ubiquitinyl-[acceptor protein]-L-lysine.</text>
        <dbReference type="EC" id="2.3.2.26"/>
    </reaction>
</comment>
<comment type="pathway">
    <text evidence="6 8">Protein modification; protein ubiquitination.</text>
</comment>
<comment type="subunit">
    <text evidence="7">Interacts with 19S proteasomes.</text>
</comment>
<comment type="subcellular location">
    <subcellularLocation>
        <location evidence="8 12">Cytoplasm</location>
        <location evidence="8 12">Cytosol</location>
    </subcellularLocation>
    <subcellularLocation>
        <location evidence="4 8">Nucleus</location>
    </subcellularLocation>
</comment>
<comment type="disruption phenotype">
    <text evidence="9">Cells are viable.</text>
</comment>
<comment type="miscellaneous">
    <text evidence="5">Present with 3120 molecules/cell in log phase SD medium.</text>
</comment>
<comment type="similarity">
    <text evidence="11">Belongs to the UBE3C family.</text>
</comment>
<dbReference type="EC" id="2.3.2.26" evidence="6 8"/>
<dbReference type="EMBL" id="X99960">
    <property type="protein sequence ID" value="CAA68221.1"/>
    <property type="molecule type" value="Genomic_DNA"/>
</dbReference>
<dbReference type="EMBL" id="Z72663">
    <property type="protein sequence ID" value="CAA96853.1"/>
    <property type="molecule type" value="Genomic_DNA"/>
</dbReference>
<dbReference type="EMBL" id="AY723811">
    <property type="protein sequence ID" value="AAU09728.1"/>
    <property type="molecule type" value="Genomic_DNA"/>
</dbReference>
<dbReference type="EMBL" id="BK006941">
    <property type="protein sequence ID" value="DAA07969.1"/>
    <property type="molecule type" value="Genomic_DNA"/>
</dbReference>
<dbReference type="PIR" id="S64155">
    <property type="entry name" value="S64155"/>
</dbReference>
<dbReference type="RefSeq" id="NP_011374.1">
    <property type="nucleotide sequence ID" value="NM_001181006.1"/>
</dbReference>
<dbReference type="SMR" id="P53119"/>
<dbReference type="BioGRID" id="33111">
    <property type="interactions" value="91"/>
</dbReference>
<dbReference type="DIP" id="DIP-6349N"/>
<dbReference type="FunCoup" id="P53119">
    <property type="interactions" value="503"/>
</dbReference>
<dbReference type="IntAct" id="P53119">
    <property type="interactions" value="7"/>
</dbReference>
<dbReference type="MINT" id="P53119"/>
<dbReference type="STRING" id="4932.YGL141W"/>
<dbReference type="iPTMnet" id="P53119"/>
<dbReference type="PaxDb" id="4932-YGL141W"/>
<dbReference type="PeptideAtlas" id="P53119"/>
<dbReference type="EnsemblFungi" id="YGL141W_mRNA">
    <property type="protein sequence ID" value="YGL141W"/>
    <property type="gene ID" value="YGL141W"/>
</dbReference>
<dbReference type="GeneID" id="852736"/>
<dbReference type="KEGG" id="sce:YGL141W"/>
<dbReference type="AGR" id="SGD:S000003109"/>
<dbReference type="SGD" id="S000003109">
    <property type="gene designation" value="HUL5"/>
</dbReference>
<dbReference type="VEuPathDB" id="FungiDB:YGL141W"/>
<dbReference type="eggNOG" id="KOG0942">
    <property type="taxonomic scope" value="Eukaryota"/>
</dbReference>
<dbReference type="GeneTree" id="ENSGT00940000156321"/>
<dbReference type="HOGENOM" id="CLU_002173_2_3_1"/>
<dbReference type="InParanoid" id="P53119"/>
<dbReference type="OMA" id="IIAPHWM"/>
<dbReference type="OrthoDB" id="8068875at2759"/>
<dbReference type="BioCyc" id="YEAST:G3O-30636-MONOMER"/>
<dbReference type="Reactome" id="R-SCE-983168">
    <property type="pathway name" value="Antigen processing: Ubiquitination &amp; Proteasome degradation"/>
</dbReference>
<dbReference type="UniPathway" id="UPA00143"/>
<dbReference type="BioGRID-ORCS" id="852736">
    <property type="hits" value="0 hits in 10 CRISPR screens"/>
</dbReference>
<dbReference type="PRO" id="PR:P53119"/>
<dbReference type="Proteomes" id="UP000002311">
    <property type="component" value="Chromosome VII"/>
</dbReference>
<dbReference type="RNAct" id="P53119">
    <property type="molecule type" value="protein"/>
</dbReference>
<dbReference type="GO" id="GO:0005737">
    <property type="term" value="C:cytoplasm"/>
    <property type="evidence" value="ECO:0007005"/>
    <property type="project" value="SGD"/>
</dbReference>
<dbReference type="GO" id="GO:0005829">
    <property type="term" value="C:cytosol"/>
    <property type="evidence" value="ECO:0000314"/>
    <property type="project" value="UniProtKB"/>
</dbReference>
<dbReference type="GO" id="GO:0005634">
    <property type="term" value="C:nucleus"/>
    <property type="evidence" value="ECO:0000314"/>
    <property type="project" value="UniProtKB"/>
</dbReference>
<dbReference type="GO" id="GO:0000502">
    <property type="term" value="C:proteasome complex"/>
    <property type="evidence" value="ECO:0000314"/>
    <property type="project" value="SGD"/>
</dbReference>
<dbReference type="GO" id="GO:0061630">
    <property type="term" value="F:ubiquitin protein ligase activity"/>
    <property type="evidence" value="ECO:0000314"/>
    <property type="project" value="UniProtKB"/>
</dbReference>
<dbReference type="GO" id="GO:0034450">
    <property type="term" value="F:ubiquitin-ubiquitin ligase activity"/>
    <property type="evidence" value="ECO:0000314"/>
    <property type="project" value="SGD"/>
</dbReference>
<dbReference type="GO" id="GO:0034605">
    <property type="term" value="P:cellular response to heat"/>
    <property type="evidence" value="ECO:0000315"/>
    <property type="project" value="SGD"/>
</dbReference>
<dbReference type="GO" id="GO:0033554">
    <property type="term" value="P:cellular response to stress"/>
    <property type="evidence" value="ECO:0000315"/>
    <property type="project" value="SGD"/>
</dbReference>
<dbReference type="GO" id="GO:0071629">
    <property type="term" value="P:cytoplasm protein quality control by the ubiquitin-proteasome system"/>
    <property type="evidence" value="ECO:0000314"/>
    <property type="project" value="UniProtKB"/>
</dbReference>
<dbReference type="GO" id="GO:0036503">
    <property type="term" value="P:ERAD pathway"/>
    <property type="evidence" value="ECO:0000315"/>
    <property type="project" value="SGD"/>
</dbReference>
<dbReference type="GO" id="GO:0010994">
    <property type="term" value="P:free ubiquitin chain polymerization"/>
    <property type="evidence" value="ECO:0000315"/>
    <property type="project" value="SGD"/>
</dbReference>
<dbReference type="GO" id="GO:0000209">
    <property type="term" value="P:protein polyubiquitination"/>
    <property type="evidence" value="ECO:0000314"/>
    <property type="project" value="UniProtKB"/>
</dbReference>
<dbReference type="GO" id="GO:0006511">
    <property type="term" value="P:ubiquitin-dependent protein catabolic process"/>
    <property type="evidence" value="ECO:0000315"/>
    <property type="project" value="SGD"/>
</dbReference>
<dbReference type="CDD" id="cd00078">
    <property type="entry name" value="HECTc"/>
    <property type="match status" value="1"/>
</dbReference>
<dbReference type="FunFam" id="3.30.2410.10:FF:000017">
    <property type="entry name" value="E3 ubiquitin-protein ligase UPL7"/>
    <property type="match status" value="1"/>
</dbReference>
<dbReference type="Gene3D" id="3.30.2160.10">
    <property type="entry name" value="Hect, E3 ligase catalytic domain"/>
    <property type="match status" value="1"/>
</dbReference>
<dbReference type="Gene3D" id="3.30.2410.10">
    <property type="entry name" value="Hect, E3 ligase catalytic domain"/>
    <property type="match status" value="1"/>
</dbReference>
<dbReference type="Gene3D" id="3.90.1750.10">
    <property type="entry name" value="Hect, E3 ligase catalytic domains"/>
    <property type="match status" value="1"/>
</dbReference>
<dbReference type="InterPro" id="IPR044611">
    <property type="entry name" value="E3A/B/C-like"/>
</dbReference>
<dbReference type="InterPro" id="IPR000569">
    <property type="entry name" value="HECT_dom"/>
</dbReference>
<dbReference type="InterPro" id="IPR035983">
    <property type="entry name" value="Hect_E3_ubiquitin_ligase"/>
</dbReference>
<dbReference type="PANTHER" id="PTHR45700">
    <property type="entry name" value="UBIQUITIN-PROTEIN LIGASE E3C"/>
    <property type="match status" value="1"/>
</dbReference>
<dbReference type="PANTHER" id="PTHR45700:SF2">
    <property type="entry name" value="UBIQUITIN-PROTEIN LIGASE E3C"/>
    <property type="match status" value="1"/>
</dbReference>
<dbReference type="Pfam" id="PF00632">
    <property type="entry name" value="HECT"/>
    <property type="match status" value="1"/>
</dbReference>
<dbReference type="SMART" id="SM00119">
    <property type="entry name" value="HECTc"/>
    <property type="match status" value="1"/>
</dbReference>
<dbReference type="SUPFAM" id="SSF56204">
    <property type="entry name" value="Hect, E3 ligase catalytic domain"/>
    <property type="match status" value="1"/>
</dbReference>
<dbReference type="PROSITE" id="PS50237">
    <property type="entry name" value="HECT"/>
    <property type="match status" value="1"/>
</dbReference>
<name>HUL5_YEAST</name>
<accession>P53119</accession>
<accession>D6VU08</accession>
<proteinExistence type="evidence at protein level"/>
<protein>
    <recommendedName>
        <fullName evidence="11">E3 ubiquitin-protein ligase HUL5</fullName>
        <ecNumber evidence="6 8">2.3.2.26</ecNumber>
    </recommendedName>
</protein>
<feature type="chain" id="PRO_0000084095" description="E3 ubiquitin-protein ligase HUL5">
    <location>
        <begin position="1"/>
        <end position="910"/>
    </location>
</feature>
<feature type="domain" description="HECT" evidence="2">
    <location>
        <begin position="810"/>
        <end position="910"/>
    </location>
</feature>
<feature type="region of interest" description="Disordered" evidence="3">
    <location>
        <begin position="1"/>
        <end position="25"/>
    </location>
</feature>
<feature type="active site" description="Glycyl thioester intermediate" evidence="2 13 14 15">
    <location>
        <position position="878"/>
    </location>
</feature>
<feature type="modified residue" description="N-acetylmethionine" evidence="17">
    <location>
        <position position="1"/>
    </location>
</feature>
<feature type="mutagenesis site" description="Abolishes E3 ubiquitin-protein ligase activity." evidence="6 7 8">
    <original>C</original>
    <variation>A</variation>
    <location>
        <position position="878"/>
    </location>
</feature>
<reference key="1">
    <citation type="journal article" date="1997" name="Yeast">
        <title>The sequence of a nearly unclonable 22.8 kb segment on the left arm chromosome VII from Saccharomyces cerevisiae reveals ARO2, RPL9A, TIP1, MRF1 genes and six new open reading frames.</title>
        <authorList>
            <person name="Voet M."/>
            <person name="Defoor E."/>
            <person name="Verhasselt P."/>
            <person name="Riles L."/>
            <person name="Robben J."/>
            <person name="Volckaert G."/>
        </authorList>
    </citation>
    <scope>NUCLEOTIDE SEQUENCE [GENOMIC DNA]</scope>
    <source>
        <strain>ATCC 96604 / S288c / FY1679</strain>
    </source>
</reference>
<reference key="2">
    <citation type="journal article" date="1997" name="Nature">
        <title>The nucleotide sequence of Saccharomyces cerevisiae chromosome VII.</title>
        <authorList>
            <person name="Tettelin H."/>
            <person name="Agostoni-Carbone M.L."/>
            <person name="Albermann K."/>
            <person name="Albers M."/>
            <person name="Arroyo J."/>
            <person name="Backes U."/>
            <person name="Barreiros T."/>
            <person name="Bertani I."/>
            <person name="Bjourson A.J."/>
            <person name="Brueckner M."/>
            <person name="Bruschi C.V."/>
            <person name="Carignani G."/>
            <person name="Castagnoli L."/>
            <person name="Cerdan E."/>
            <person name="Clemente M.L."/>
            <person name="Coblenz A."/>
            <person name="Coglievina M."/>
            <person name="Coissac E."/>
            <person name="Defoor E."/>
            <person name="Del Bino S."/>
            <person name="Delius H."/>
            <person name="Delneri D."/>
            <person name="de Wergifosse P."/>
            <person name="Dujon B."/>
            <person name="Durand P."/>
            <person name="Entian K.-D."/>
            <person name="Eraso P."/>
            <person name="Escribano V."/>
            <person name="Fabiani L."/>
            <person name="Fartmann B."/>
            <person name="Feroli F."/>
            <person name="Feuermann M."/>
            <person name="Frontali L."/>
            <person name="Garcia-Gonzalez M."/>
            <person name="Garcia-Saez M.I."/>
            <person name="Goffeau A."/>
            <person name="Guerreiro P."/>
            <person name="Hani J."/>
            <person name="Hansen M."/>
            <person name="Hebling U."/>
            <person name="Hernandez K."/>
            <person name="Heumann K."/>
            <person name="Hilger F."/>
            <person name="Hofmann B."/>
            <person name="Indge K.J."/>
            <person name="James C.M."/>
            <person name="Klima R."/>
            <person name="Koetter P."/>
            <person name="Kramer B."/>
            <person name="Kramer W."/>
            <person name="Lauquin G."/>
            <person name="Leuther H."/>
            <person name="Louis E.J."/>
            <person name="Maillier E."/>
            <person name="Marconi A."/>
            <person name="Martegani E."/>
            <person name="Mazon M.J."/>
            <person name="Mazzoni C."/>
            <person name="McReynolds A.D.K."/>
            <person name="Melchioretto P."/>
            <person name="Mewes H.-W."/>
            <person name="Minenkova O."/>
            <person name="Mueller-Auer S."/>
            <person name="Nawrocki A."/>
            <person name="Netter P."/>
            <person name="Neu R."/>
            <person name="Nombela C."/>
            <person name="Oliver S.G."/>
            <person name="Panzeri L."/>
            <person name="Paoluzi S."/>
            <person name="Plevani P."/>
            <person name="Portetelle D."/>
            <person name="Portillo F."/>
            <person name="Potier S."/>
            <person name="Purnelle B."/>
            <person name="Rieger M."/>
            <person name="Riles L."/>
            <person name="Rinaldi T."/>
            <person name="Robben J."/>
            <person name="Rodrigues-Pousada C."/>
            <person name="Rodriguez-Belmonte E."/>
            <person name="Rodriguez-Torres A.M."/>
            <person name="Rose M."/>
            <person name="Ruzzi M."/>
            <person name="Saliola M."/>
            <person name="Sanchez-Perez M."/>
            <person name="Schaefer B."/>
            <person name="Schaefer M."/>
            <person name="Scharfe M."/>
            <person name="Schmidheini T."/>
            <person name="Schreer A."/>
            <person name="Skala J."/>
            <person name="Souciet J.-L."/>
            <person name="Steensma H.Y."/>
            <person name="Talla E."/>
            <person name="Thierry A."/>
            <person name="Vandenbol M."/>
            <person name="van der Aart Q.J.M."/>
            <person name="Van Dyck L."/>
            <person name="Vanoni M."/>
            <person name="Verhasselt P."/>
            <person name="Voet M."/>
            <person name="Volckaert G."/>
            <person name="Wambutt R."/>
            <person name="Watson M.D."/>
            <person name="Weber N."/>
            <person name="Wedler E."/>
            <person name="Wedler H."/>
            <person name="Wipfli P."/>
            <person name="Wolf K."/>
            <person name="Wright L.F."/>
            <person name="Zaccaria P."/>
            <person name="Zimmermann M."/>
            <person name="Zollner A."/>
            <person name="Kleine K."/>
        </authorList>
    </citation>
    <scope>NUCLEOTIDE SEQUENCE [LARGE SCALE GENOMIC DNA]</scope>
    <source>
        <strain>ATCC 204508 / S288c</strain>
    </source>
</reference>
<reference key="3">
    <citation type="journal article" date="2014" name="G3 (Bethesda)">
        <title>The reference genome sequence of Saccharomyces cerevisiae: Then and now.</title>
        <authorList>
            <person name="Engel S.R."/>
            <person name="Dietrich F.S."/>
            <person name="Fisk D.G."/>
            <person name="Binkley G."/>
            <person name="Balakrishnan R."/>
            <person name="Costanzo M.C."/>
            <person name="Dwight S.S."/>
            <person name="Hitz B.C."/>
            <person name="Karra K."/>
            <person name="Nash R.S."/>
            <person name="Weng S."/>
            <person name="Wong E.D."/>
            <person name="Lloyd P."/>
            <person name="Skrzypek M.S."/>
            <person name="Miyasato S.R."/>
            <person name="Simison M."/>
            <person name="Cherry J.M."/>
        </authorList>
    </citation>
    <scope>GENOME REANNOTATION</scope>
    <source>
        <strain>ATCC 204508 / S288c</strain>
    </source>
</reference>
<reference key="4">
    <citation type="journal article" date="2007" name="Genome Res.">
        <title>Approaching a complete repository of sequence-verified protein-encoding clones for Saccharomyces cerevisiae.</title>
        <authorList>
            <person name="Hu Y."/>
            <person name="Rolfs A."/>
            <person name="Bhullar B."/>
            <person name="Murthy T.V.S."/>
            <person name="Zhu C."/>
            <person name="Berger M.F."/>
            <person name="Camargo A.A."/>
            <person name="Kelley F."/>
            <person name="McCarron S."/>
            <person name="Jepson D."/>
            <person name="Richardson A."/>
            <person name="Raphael J."/>
            <person name="Moreira D."/>
            <person name="Taycher E."/>
            <person name="Zuo D."/>
            <person name="Mohr S."/>
            <person name="Kane M.F."/>
            <person name="Williamson J."/>
            <person name="Simpson A.J.G."/>
            <person name="Bulyk M.L."/>
            <person name="Harlow E."/>
            <person name="Marsischky G."/>
            <person name="Kolodner R.D."/>
            <person name="LaBaer J."/>
        </authorList>
    </citation>
    <scope>NUCLEOTIDE SEQUENCE [GENOMIC DNA]</scope>
    <source>
        <strain>ATCC 204508 / S288c</strain>
    </source>
</reference>
<reference key="5">
    <citation type="journal article" date="1999" name="Mol. Cell. Biol.">
        <title>Functional domains of the rsp5 ubiquitin-protein ligase.</title>
        <authorList>
            <person name="Wang G."/>
            <person name="Yang J."/>
            <person name="Huibregtse J.M."/>
        </authorList>
    </citation>
    <scope>GENE NAME</scope>
    <scope>DISRUPTION PHENOTYPE</scope>
</reference>
<reference key="6">
    <citation type="journal article" date="2003" name="Nature">
        <title>Global analysis of protein localization in budding yeast.</title>
        <authorList>
            <person name="Huh W.-K."/>
            <person name="Falvo J.V."/>
            <person name="Gerke L.C."/>
            <person name="Carroll A.S."/>
            <person name="Howson R.W."/>
            <person name="Weissman J.S."/>
            <person name="O'Shea E.K."/>
        </authorList>
    </citation>
    <scope>SUBCELLULAR LOCATION [LARGE SCALE ANALYSIS]</scope>
</reference>
<reference key="7">
    <citation type="journal article" date="2003" name="Nature">
        <title>Global analysis of protein expression in yeast.</title>
        <authorList>
            <person name="Ghaemmaghami S."/>
            <person name="Huh W.-K."/>
            <person name="Bower K."/>
            <person name="Howson R.W."/>
            <person name="Belle A."/>
            <person name="Dephoure N."/>
            <person name="O'Shea E.K."/>
            <person name="Weissman J.S."/>
        </authorList>
    </citation>
    <scope>LEVEL OF PROTEIN EXPRESSION [LARGE SCALE ANALYSIS]</scope>
</reference>
<reference key="8">
    <citation type="journal article" date="2006" name="Cell">
        <title>Ubiquitin chains are remodeled at the proteasome by opposing ubiquitin ligase and deubiquitinating activities.</title>
        <authorList>
            <person name="Crosas B."/>
            <person name="Hanna J."/>
            <person name="Kirkpatrick D.S."/>
            <person name="Zhang D.P."/>
            <person name="Tone Y."/>
            <person name="Hathaway N.A."/>
            <person name="Buecker C."/>
            <person name="Leggett D.S."/>
            <person name="Schmidt M."/>
            <person name="King R.W."/>
            <person name="Gygi S.P."/>
            <person name="Finley D."/>
        </authorList>
    </citation>
    <scope>FUNCTION</scope>
    <scope>CATALYTIC ACTIVITY</scope>
    <scope>PATHWAY</scope>
    <scope>ACTIVE SITE</scope>
    <scope>MUTAGENESIS OF CYS-878</scope>
</reference>
<reference key="9">
    <citation type="journal article" date="2010" name="Mol. Cell. Biol.">
        <title>The ubiquitin ligase Hul5 promotes proteasomal processivity.</title>
        <authorList>
            <person name="Aviram S."/>
            <person name="Kornitzer D."/>
        </authorList>
    </citation>
    <scope>FUNCTION</scope>
    <scope>INTERACTION WITH THE 19S PROTEASOME</scope>
    <scope>ACTIVE SITE</scope>
    <scope>MUTAGENESIS OF CYS-878</scope>
</reference>
<reference key="10">
    <citation type="journal article" date="2011" name="Nat. Cell Biol.">
        <title>Hul5 HECT ubiquitin ligase plays a major role in the ubiquitylation and turnover of cytosolic misfolded proteins.</title>
        <authorList>
            <person name="Fang N.N."/>
            <person name="Ng A.H."/>
            <person name="Measday V."/>
            <person name="Mayor T."/>
        </authorList>
    </citation>
    <scope>FUNCTION</scope>
    <scope>CATALYTIC ACTIVITY</scope>
    <scope>SUBCELLULAR LOCATION</scope>
    <scope>PATHWAY</scope>
    <scope>ACTIVE SITE</scope>
    <scope>MUTAGENESIS OF CYS-878</scope>
</reference>
<reference key="11">
    <citation type="journal article" date="2012" name="Proc. Natl. Acad. Sci. U.S.A.">
        <title>N-terminal acetylome analyses and functional insights of the N-terminal acetyltransferase NatB.</title>
        <authorList>
            <person name="Van Damme P."/>
            <person name="Lasa M."/>
            <person name="Polevoda B."/>
            <person name="Gazquez C."/>
            <person name="Elosegui-Artola A."/>
            <person name="Kim D.S."/>
            <person name="De Juan-Pardo E."/>
            <person name="Demeyer K."/>
            <person name="Hole K."/>
            <person name="Larrea E."/>
            <person name="Timmerman E."/>
            <person name="Prieto J."/>
            <person name="Arnesen T."/>
            <person name="Sherman F."/>
            <person name="Gevaert K."/>
            <person name="Aldabe R."/>
        </authorList>
    </citation>
    <scope>ACETYLATION [LARGE SCALE ANALYSIS] AT MET-1</scope>
    <scope>IDENTIFICATION BY MASS SPECTROMETRY [LARGE SCALE ANALYSIS]</scope>
</reference>
<sequence length="910" mass="105566">MLNFTGQTRRRNVNLGNRTRNSKKDLLEKAKRERERRAQDKLKEDASKTIQKSIRRHFSNVRLFKNTFTSSQLVHMIPAYGGKLIYYISQYDLQQLLKLSHNFLSSYPNSLGNRQLLSLLKLYQDDALVAETLSDLNMDCPTVDEFLDSLSVYLCRASFLSYSSASKLADVIEAWEVMHSSASISIFSISIGSYEKRPFALQFYCILAERNLLPQLINTNPILWDNMAKTYSHCSKGGQKNIAKLLIPNFNNHIAPSVLRSDNDYVLKFYEKAFIDEVIATTANYVSDEDHVKNLMCYIASSPNQSCKNSVLITLLSNKDFVRRLSWEFFHTKFNASKTEAHPLFSVLAQLIDMHLLISTDRELLDYNSVIPIEELKKFTSTLKDFTFRQYWELPKSERNPMLKEAVPLLSKVYERDSRLHFLSTENNPTYWENSEKQFLNLRFYEELQEYEDLYREHLEEESDEDMEKEIDLDKERPPLKSLLLNKMKKRLKSSLRFRKLEILLELPFFIPFEERVDLFYMFIALDKKRLSLDDDHNLINMFTPWASTGMRKQSAIISRDNVLEDAFNAFNSIGERFKASLDVTFINEFGEEAGIDGGGITKEFLTTVSDEGFKDPKHELFRTNDRYELYPSVVYDATKLKYIWFLGKVVGKCLYEHVLIDVSFADFFLKKLLNYSNGFLSSFSDLGSYDSVLYNNLIKLLNMTTDEIKSLDLTFEIDEPESSAKVVDLIPNGSKTYVTKDNVLLYVTKVTDYKLNKRCFKPVSAFHGGLSVIIAPHWMEMFNSIELQMLISGERDNIDLDDLKSNTEYGGYKEEDQTIVDFWEVLNEFKFEEKLNFLKFVTSVPQAPLQGFKALDPKFGIRNAGTEKYRLPTASTCVNLLKLPDYRNKTILREKLLYAINSGARFDLS</sequence>
<keyword id="KW-0007">Acetylation</keyword>
<keyword id="KW-0963">Cytoplasm</keyword>
<keyword id="KW-0539">Nucleus</keyword>
<keyword id="KW-1185">Reference proteome</keyword>
<keyword id="KW-0808">Transferase</keyword>
<keyword id="KW-0833">Ubl conjugation pathway</keyword>
<evidence type="ECO:0000250" key="1">
    <source>
        <dbReference type="UniProtKB" id="Q15386"/>
    </source>
</evidence>
<evidence type="ECO:0000255" key="2">
    <source>
        <dbReference type="PROSITE-ProRule" id="PRU00104"/>
    </source>
</evidence>
<evidence type="ECO:0000256" key="3">
    <source>
        <dbReference type="SAM" id="MobiDB-lite"/>
    </source>
</evidence>
<evidence type="ECO:0000269" key="4">
    <source>
    </source>
</evidence>
<evidence type="ECO:0000269" key="5">
    <source>
    </source>
</evidence>
<evidence type="ECO:0000269" key="6">
    <source>
    </source>
</evidence>
<evidence type="ECO:0000269" key="7">
    <source>
    </source>
</evidence>
<evidence type="ECO:0000269" key="8">
    <source>
    </source>
</evidence>
<evidence type="ECO:0000269" key="9">
    <source>
    </source>
</evidence>
<evidence type="ECO:0000303" key="10">
    <source>
    </source>
</evidence>
<evidence type="ECO:0000305" key="11"/>
<evidence type="ECO:0000305" key="12">
    <source>
    </source>
</evidence>
<evidence type="ECO:0000305" key="13">
    <source>
    </source>
</evidence>
<evidence type="ECO:0000305" key="14">
    <source>
    </source>
</evidence>
<evidence type="ECO:0000305" key="15">
    <source>
    </source>
</evidence>
<evidence type="ECO:0000312" key="16">
    <source>
        <dbReference type="SGD" id="S000003109"/>
    </source>
</evidence>
<evidence type="ECO:0007744" key="17">
    <source>
    </source>
</evidence>
<organism>
    <name type="scientific">Saccharomyces cerevisiae (strain ATCC 204508 / S288c)</name>
    <name type="common">Baker's yeast</name>
    <dbReference type="NCBI Taxonomy" id="559292"/>
    <lineage>
        <taxon>Eukaryota</taxon>
        <taxon>Fungi</taxon>
        <taxon>Dikarya</taxon>
        <taxon>Ascomycota</taxon>
        <taxon>Saccharomycotina</taxon>
        <taxon>Saccharomycetes</taxon>
        <taxon>Saccharomycetales</taxon>
        <taxon>Saccharomycetaceae</taxon>
        <taxon>Saccharomyces</taxon>
    </lineage>
</organism>
<gene>
    <name evidence="10 16" type="primary">HUL5</name>
    <name evidence="16" type="ordered locus">YGL141W</name>
</gene>